<protein>
    <recommendedName>
        <fullName>Cysteine-rich venom protein helothermine</fullName>
        <shortName>CRVP HLTx</shortName>
    </recommendedName>
</protein>
<evidence type="ECO:0000255" key="1">
    <source>
        <dbReference type="PROSITE-ProRule" id="PRU01005"/>
    </source>
</evidence>
<evidence type="ECO:0000269" key="2">
    <source>
    </source>
</evidence>
<evidence type="ECO:0000269" key="3">
    <source>
    </source>
</evidence>
<evidence type="ECO:0000269" key="4">
    <source>
    </source>
</evidence>
<evidence type="ECO:0000269" key="5">
    <source>
    </source>
</evidence>
<evidence type="ECO:0000305" key="6"/>
<evidence type="ECO:0000305" key="7">
    <source>
    </source>
</evidence>
<organism>
    <name type="scientific">Heloderma horridum horridum</name>
    <name type="common">Mexican beaded lizard</name>
    <dbReference type="NCBI Taxonomy" id="8552"/>
    <lineage>
        <taxon>Eukaryota</taxon>
        <taxon>Metazoa</taxon>
        <taxon>Chordata</taxon>
        <taxon>Craniata</taxon>
        <taxon>Vertebrata</taxon>
        <taxon>Euteleostomi</taxon>
        <taxon>Lepidosauria</taxon>
        <taxon>Squamata</taxon>
        <taxon>Bifurcata</taxon>
        <taxon>Unidentata</taxon>
        <taxon>Episquamata</taxon>
        <taxon>Toxicofera</taxon>
        <taxon>Anguimorpha</taxon>
        <taxon>Neoanguimorpha</taxon>
        <taxon>Helodermatidae</taxon>
        <taxon>Heloderma</taxon>
    </lineage>
</organism>
<keyword id="KW-0108">Calcium channel impairing toxin</keyword>
<keyword id="KW-0903">Direct protein sequencing</keyword>
<keyword id="KW-1015">Disulfide bond</keyword>
<keyword id="KW-0872">Ion channel impairing toxin</keyword>
<keyword id="KW-0528">Neurotoxin</keyword>
<keyword id="KW-0632">Potassium channel impairing toxin</keyword>
<keyword id="KW-1219">Ryanodine-sensitive calcium-release channel impairing toxin</keyword>
<keyword id="KW-0964">Secreted</keyword>
<keyword id="KW-0732">Signal</keyword>
<keyword id="KW-0800">Toxin</keyword>
<keyword id="KW-1218">Voltage-gated calcium channel impairing toxin</keyword>
<keyword id="KW-1220">Voltage-gated potassium channel impairing toxin</keyword>
<name>CRVP_HELHO</name>
<dbReference type="EMBL" id="U13619">
    <property type="protein sequence ID" value="AAC59730.1"/>
    <property type="molecule type" value="mRNA"/>
</dbReference>
<dbReference type="PIR" id="A34859">
    <property type="entry name" value="A34859"/>
</dbReference>
<dbReference type="SMR" id="Q91055"/>
<dbReference type="TCDB" id="8.B.9.1.3">
    <property type="family name" value="the triflin toxin (triflin or crisp) family"/>
</dbReference>
<dbReference type="GO" id="GO:0005576">
    <property type="term" value="C:extracellular region"/>
    <property type="evidence" value="ECO:0007669"/>
    <property type="project" value="UniProtKB-SubCell"/>
</dbReference>
<dbReference type="GO" id="GO:0005246">
    <property type="term" value="F:calcium channel regulator activity"/>
    <property type="evidence" value="ECO:0007669"/>
    <property type="project" value="UniProtKB-KW"/>
</dbReference>
<dbReference type="GO" id="GO:0015459">
    <property type="term" value="F:potassium channel regulator activity"/>
    <property type="evidence" value="ECO:0007669"/>
    <property type="project" value="UniProtKB-KW"/>
</dbReference>
<dbReference type="GO" id="GO:0090729">
    <property type="term" value="F:toxin activity"/>
    <property type="evidence" value="ECO:0007669"/>
    <property type="project" value="UniProtKB-KW"/>
</dbReference>
<dbReference type="CDD" id="cd05383">
    <property type="entry name" value="CAP_CRISP"/>
    <property type="match status" value="1"/>
</dbReference>
<dbReference type="FunFam" id="1.10.10.740:FF:000001">
    <property type="entry name" value="Cysteine-rich secretory protein 2"/>
    <property type="match status" value="1"/>
</dbReference>
<dbReference type="FunFam" id="3.40.33.10:FF:000005">
    <property type="entry name" value="Cysteine-rich secretory protein 2"/>
    <property type="match status" value="1"/>
</dbReference>
<dbReference type="Gene3D" id="3.40.33.10">
    <property type="entry name" value="CAP"/>
    <property type="match status" value="1"/>
</dbReference>
<dbReference type="Gene3D" id="1.10.10.740">
    <property type="entry name" value="Crisp domain"/>
    <property type="match status" value="1"/>
</dbReference>
<dbReference type="InterPro" id="IPR018244">
    <property type="entry name" value="Allrgn_V5/Tpx1_CS"/>
</dbReference>
<dbReference type="InterPro" id="IPR014044">
    <property type="entry name" value="CAP_dom"/>
</dbReference>
<dbReference type="InterPro" id="IPR035940">
    <property type="entry name" value="CAP_sf"/>
</dbReference>
<dbReference type="InterPro" id="IPR042076">
    <property type="entry name" value="Crisp-like_dom"/>
</dbReference>
<dbReference type="InterPro" id="IPR001283">
    <property type="entry name" value="CRISP-related"/>
</dbReference>
<dbReference type="InterPro" id="IPR013871">
    <property type="entry name" value="Cysteine_rich_secretory"/>
</dbReference>
<dbReference type="InterPro" id="IPR034117">
    <property type="entry name" value="SCP_CRISP"/>
</dbReference>
<dbReference type="InterPro" id="IPR003582">
    <property type="entry name" value="ShKT_dom"/>
</dbReference>
<dbReference type="PANTHER" id="PTHR10334">
    <property type="entry name" value="CYSTEINE-RICH SECRETORY PROTEIN-RELATED"/>
    <property type="match status" value="1"/>
</dbReference>
<dbReference type="Pfam" id="PF00188">
    <property type="entry name" value="CAP"/>
    <property type="match status" value="1"/>
</dbReference>
<dbReference type="Pfam" id="PF08562">
    <property type="entry name" value="Crisp"/>
    <property type="match status" value="1"/>
</dbReference>
<dbReference type="PRINTS" id="PR00837">
    <property type="entry name" value="V5TPXLIKE"/>
</dbReference>
<dbReference type="SMART" id="SM00198">
    <property type="entry name" value="SCP"/>
    <property type="match status" value="1"/>
</dbReference>
<dbReference type="SUPFAM" id="SSF57546">
    <property type="entry name" value="Crisp domain-like"/>
    <property type="match status" value="1"/>
</dbReference>
<dbReference type="SUPFAM" id="SSF55797">
    <property type="entry name" value="PR-1-like"/>
    <property type="match status" value="1"/>
</dbReference>
<dbReference type="PROSITE" id="PS01009">
    <property type="entry name" value="CRISP_1"/>
    <property type="match status" value="1"/>
</dbReference>
<dbReference type="PROSITE" id="PS51670">
    <property type="entry name" value="SHKT"/>
    <property type="match status" value="1"/>
</dbReference>
<comment type="function">
    <text evidence="3 4 5">Alters a variety of ion channel activities, including voltage-gated potassium channels (Kv) (PubMed:8071987), voltage-gated calcium channels (L-, N-, and P-type) (Cav) (PubMed:8817251) and ryanodine receptors (RyR) (PubMed:7647234). Is toxic to mice (causes lethargy, partial paralysis of rear limbs and lowering of body temperature).</text>
</comment>
<comment type="subcellular location">
    <subcellularLocation>
        <location>Secreted</location>
    </subcellularLocation>
</comment>
<comment type="tissue specificity">
    <text>Expressed by the venom gland.</text>
</comment>
<comment type="miscellaneous">
    <text evidence="7">IC(50)=0.52 uM on IA-type current, and 0.86 uM on delayed rectifier current.</text>
</comment>
<comment type="similarity">
    <text evidence="6">Belongs to the CRISP family.</text>
</comment>
<sequence length="242" mass="27493">MILLSLYLCLAAMLHQSEGEASPKLPGLMTSNPDQQTEITDKHNNLRRIVEPTASNMLKMTWSNKIAQNAQRSANQCTLEHTSKEERTIDGVECGENLFFSSAPYTWSYAIQNWFDERKYFRFNYGPTAQNVMIGHYTQVVWYRSYELGCAIAYCPDQPTYKYYQVCQYCPGGNIRSRKYTPYSIGPPCGDCPDACDNGLCTNPCKQNDVYNNCPDLKKQVGCGHPIMKDCMATCKCLTEIK</sequence>
<reference key="1">
    <citation type="journal article" date="1995" name="Biophys. J.">
        <title>Primary structure and properties of helothermine, a peptide toxin that blocks ryanodine receptors.</title>
        <authorList>
            <person name="Morrissette J."/>
            <person name="Kraetzschmar J."/>
            <person name="Haendler B."/>
            <person name="El-Hayek R."/>
            <person name="Mochca-Morales J."/>
            <person name="Martin B.M."/>
            <person name="Patel J.R."/>
            <person name="Moss R.L."/>
            <person name="Schleuning W.-D."/>
            <person name="Coronado R."/>
            <person name="Possani L.D."/>
        </authorList>
    </citation>
    <scope>NUCLEOTIDE SEQUENCE [MRNA]</scope>
    <scope>PARTIAL PROTEIN SEQUENCE</scope>
    <scope>FUNCTION</scope>
</reference>
<reference key="2">
    <citation type="journal article" date="1990" name="Toxicon">
        <title>Isolation and characterization of helothermine, a novel toxin from Heloderma horridum horridum (Mexican beaded lizard) venom.</title>
        <authorList>
            <person name="Mochca-Morales J."/>
            <person name="Martin B.M."/>
            <person name="Possani L.D."/>
        </authorList>
    </citation>
    <scope>PROTEIN SEQUENCE OF 20-39</scope>
    <scope>CHARACTERIZATION</scope>
    <source>
        <tissue>Venom</tissue>
    </source>
</reference>
<reference key="3">
    <citation type="journal article" date="1994" name="J. Membr. Biol.">
        <title>The toxin helothermine affects potassium currents in newborn rat cerebellar granule cells.</title>
        <authorList>
            <person name="Nobile M."/>
            <person name="Magnelli V."/>
            <person name="Lagostena L."/>
            <person name="Mochca-Morales J."/>
            <person name="Possani L.D."/>
            <person name="Prestipino G."/>
        </authorList>
    </citation>
    <scope>FUNCTION</scope>
</reference>
<reference key="4">
    <citation type="journal article" date="1996" name="Exp. Brain Res.">
        <title>Helothermine, a lizard venom toxin, inhibits calcium current in cerebellar granules.</title>
        <authorList>
            <person name="Nobile M."/>
            <person name="Noceti F."/>
            <person name="Prestipino G."/>
            <person name="Possani L.D."/>
        </authorList>
    </citation>
    <scope>FUNCTION</scope>
</reference>
<feature type="signal peptide" evidence="2">
    <location>
        <begin position="1"/>
        <end position="19"/>
    </location>
</feature>
<feature type="chain" id="PRO_0000006272" description="Cysteine-rich venom protein helothermine">
    <location>
        <begin position="20"/>
        <end position="242"/>
    </location>
</feature>
<feature type="domain" description="SCP">
    <location>
        <begin position="41"/>
        <end position="169"/>
    </location>
</feature>
<feature type="domain" description="ShKT" evidence="1">
    <location>
        <begin position="205"/>
        <end position="237"/>
    </location>
</feature>
<feature type="disulfide bond" evidence="1">
    <location>
        <begin position="77"/>
        <end position="155"/>
    </location>
</feature>
<feature type="disulfide bond" evidence="1">
    <location>
        <begin position="94"/>
        <end position="170"/>
    </location>
</feature>
<feature type="disulfide bond" evidence="1">
    <location>
        <begin position="150"/>
        <end position="167"/>
    </location>
</feature>
<feature type="disulfide bond" evidence="1">
    <location>
        <begin position="189"/>
        <end position="196"/>
    </location>
</feature>
<feature type="disulfide bond" evidence="1">
    <location>
        <begin position="192"/>
        <end position="201"/>
    </location>
</feature>
<feature type="disulfide bond" evidence="1">
    <location>
        <begin position="205"/>
        <end position="237"/>
    </location>
</feature>
<feature type="disulfide bond" evidence="1">
    <location>
        <begin position="214"/>
        <end position="231"/>
    </location>
</feature>
<feature type="disulfide bond" evidence="1">
    <location>
        <begin position="223"/>
        <end position="235"/>
    </location>
</feature>
<accession>Q91055</accession>
<accession>P46693</accession>
<proteinExistence type="evidence at protein level"/>